<proteinExistence type="evidence at protein level"/>
<comment type="catalytic activity">
    <reaction>
        <text>Endohydrolysis of (1-&gt;4)-beta-D-glucosidic linkages in cellulose, lichenin and cereal beta-D-glucans.</text>
        <dbReference type="EC" id="3.2.1.4"/>
    </reaction>
</comment>
<comment type="PTM">
    <text>The linker region (also termed 'hinge') may be a potential site for proteolysis.</text>
</comment>
<comment type="similarity">
    <text evidence="6">Belongs to the glycosyl hydrolase 5 (cellulase A) family.</text>
</comment>
<organism>
    <name type="scientific">Streptomyces lividans</name>
    <dbReference type="NCBI Taxonomy" id="1916"/>
    <lineage>
        <taxon>Bacteria</taxon>
        <taxon>Bacillati</taxon>
        <taxon>Actinomycetota</taxon>
        <taxon>Actinomycetes</taxon>
        <taxon>Kitasatosporales</taxon>
        <taxon>Streptomycetaceae</taxon>
        <taxon>Streptomyces</taxon>
    </lineage>
</organism>
<feature type="signal peptide" evidence="5">
    <location>
        <begin position="1"/>
        <end position="27"/>
    </location>
</feature>
<feature type="chain" id="PRO_0000007873" description="Endoglucanase CelA">
    <location>
        <begin position="28"/>
        <end position="459"/>
    </location>
</feature>
<feature type="domain" description="CBM2" evidence="3">
    <location>
        <begin position="28"/>
        <end position="134"/>
    </location>
</feature>
<feature type="region of interest" description="Disordered" evidence="4">
    <location>
        <begin position="129"/>
        <end position="151"/>
    </location>
</feature>
<feature type="region of interest" description="Linker ('hinge') (Pro-Thr box)">
    <location>
        <begin position="136"/>
        <end position="147"/>
    </location>
</feature>
<feature type="region of interest" description="Catalytic">
    <location>
        <begin position="148"/>
        <end position="357"/>
    </location>
</feature>
<feature type="active site" description="Proton donor" evidence="2">
    <location>
        <position position="286"/>
    </location>
</feature>
<feature type="active site" description="Nucleophile" evidence="2">
    <location>
        <position position="378"/>
    </location>
</feature>
<feature type="disulfide bond" evidence="1">
    <location>
        <begin position="31"/>
        <end position="131"/>
    </location>
</feature>
<keyword id="KW-0119">Carbohydrate metabolism</keyword>
<keyword id="KW-0136">Cellulose degradation</keyword>
<keyword id="KW-0903">Direct protein sequencing</keyword>
<keyword id="KW-1015">Disulfide bond</keyword>
<keyword id="KW-0326">Glycosidase</keyword>
<keyword id="KW-0378">Hydrolase</keyword>
<keyword id="KW-0624">Polysaccharide degradation</keyword>
<keyword id="KW-0732">Signal</keyword>
<reference key="1">
    <citation type="journal article" date="1992" name="Appl. Environ. Microbiol.">
        <title>Purification and characterization of an endoglucanase from Streptomyces lividans 66 and DNA sequence of the gene.</title>
        <authorList>
            <person name="Theberge M."/>
            <person name="Lacaze P."/>
            <person name="Shareck F."/>
            <person name="Morosoli R."/>
            <person name="Kluepfel D."/>
        </authorList>
    </citation>
    <scope>NUCLEOTIDE SEQUENCE [GENOMIC DNA]</scope>
    <scope>PROTEIN SEQUENCE OF 28-43</scope>
    <source>
        <strain>66 / 1326</strain>
    </source>
</reference>
<sequence>MKRLLALLATGVSIVGLTALAGPPAQAATGCKAEYTITSQWEGGFQAGVKITNLGDPVSGWTLGFTMPDAGQRLVQGWNATWSQSGSAVTAGGVDWNRTLATGASADLGFVGSFTGANPAPTSFTLNGATCSGSVTDPPTDPPTDPPATGTPAAVNGQLHVCGVHLCNQYDRPIQLRGMSTHGIQWFGPCYGDASLDRLAQDWKSDLLRVAMYVQEDGYETDPAGFTSRVNGLVDMAEDRGMYAVIDFHTLTPGDPNYNLDRARTFFSSVAARNDKKNVIYEIANEPNGVSWTAVKSYAEQVIPVIRAADPDAVVIVGTRGWSSLGVSDGANESEVVNNPVNATNIMYAFHFYAASHKDDYRAAVRPAATRLPLFVSEFGTVSATAWSVDRSSSVAWLDLLDQLKISYANWTYSDADEGSAAFRPGTCEGTDYSSSGVLTESGALVKSRISTTDDFPTS</sequence>
<protein>
    <recommendedName>
        <fullName>Endoglucanase CelA</fullName>
        <ecNumber>3.2.1.4</ecNumber>
    </recommendedName>
    <alternativeName>
        <fullName>Cellulase</fullName>
    </alternativeName>
    <alternativeName>
        <fullName>Endo-1,4-beta-glucanase</fullName>
    </alternativeName>
</protein>
<accession>P27035</accession>
<gene>
    <name type="primary">celA</name>
</gene>
<evidence type="ECO:0000250" key="1"/>
<evidence type="ECO:0000250" key="2">
    <source>
        <dbReference type="UniProtKB" id="O85465"/>
    </source>
</evidence>
<evidence type="ECO:0000255" key="3">
    <source>
        <dbReference type="PROSITE-ProRule" id="PRU01135"/>
    </source>
</evidence>
<evidence type="ECO:0000256" key="4">
    <source>
        <dbReference type="SAM" id="MobiDB-lite"/>
    </source>
</evidence>
<evidence type="ECO:0000269" key="5">
    <source>
    </source>
</evidence>
<evidence type="ECO:0000305" key="6"/>
<dbReference type="EC" id="3.2.1.4"/>
<dbReference type="EMBL" id="M82807">
    <property type="status" value="NOT_ANNOTATED_CDS"/>
    <property type="molecule type" value="Genomic_DNA"/>
</dbReference>
<dbReference type="SMR" id="P27035"/>
<dbReference type="CAZy" id="CBM2">
    <property type="family name" value="Carbohydrate-Binding Module Family 2"/>
</dbReference>
<dbReference type="CAZy" id="GH5">
    <property type="family name" value="Glycoside Hydrolase Family 5"/>
</dbReference>
<dbReference type="GO" id="GO:0008810">
    <property type="term" value="F:cellulase activity"/>
    <property type="evidence" value="ECO:0007669"/>
    <property type="project" value="UniProtKB-EC"/>
</dbReference>
<dbReference type="GO" id="GO:0030247">
    <property type="term" value="F:polysaccharide binding"/>
    <property type="evidence" value="ECO:0007669"/>
    <property type="project" value="InterPro"/>
</dbReference>
<dbReference type="GO" id="GO:0030245">
    <property type="term" value="P:cellulose catabolic process"/>
    <property type="evidence" value="ECO:0007669"/>
    <property type="project" value="UniProtKB-KW"/>
</dbReference>
<dbReference type="Gene3D" id="2.60.40.290">
    <property type="match status" value="1"/>
</dbReference>
<dbReference type="Gene3D" id="3.20.20.80">
    <property type="entry name" value="Glycosidases"/>
    <property type="match status" value="1"/>
</dbReference>
<dbReference type="InterPro" id="IPR001919">
    <property type="entry name" value="CBD2"/>
</dbReference>
<dbReference type="InterPro" id="IPR008965">
    <property type="entry name" value="CBM2/CBM3_carb-bd_dom_sf"/>
</dbReference>
<dbReference type="InterPro" id="IPR012291">
    <property type="entry name" value="CBM2_carb-bd_dom_sf"/>
</dbReference>
<dbReference type="InterPro" id="IPR018366">
    <property type="entry name" value="CBM2_CS"/>
</dbReference>
<dbReference type="InterPro" id="IPR001547">
    <property type="entry name" value="Glyco_hydro_5"/>
</dbReference>
<dbReference type="InterPro" id="IPR018087">
    <property type="entry name" value="Glyco_hydro_5_CS"/>
</dbReference>
<dbReference type="InterPro" id="IPR017853">
    <property type="entry name" value="Glycoside_hydrolase_SF"/>
</dbReference>
<dbReference type="PANTHER" id="PTHR34142">
    <property type="entry name" value="ENDO-BETA-1,4-GLUCANASE A"/>
    <property type="match status" value="1"/>
</dbReference>
<dbReference type="PANTHER" id="PTHR34142:SF1">
    <property type="entry name" value="GLYCOSIDE HYDROLASE FAMILY 5 DOMAIN-CONTAINING PROTEIN"/>
    <property type="match status" value="1"/>
</dbReference>
<dbReference type="Pfam" id="PF00553">
    <property type="entry name" value="CBM_2"/>
    <property type="match status" value="1"/>
</dbReference>
<dbReference type="Pfam" id="PF00150">
    <property type="entry name" value="Cellulase"/>
    <property type="match status" value="1"/>
</dbReference>
<dbReference type="SMART" id="SM00637">
    <property type="entry name" value="CBD_II"/>
    <property type="match status" value="1"/>
</dbReference>
<dbReference type="SUPFAM" id="SSF51445">
    <property type="entry name" value="(Trans)glycosidases"/>
    <property type="match status" value="1"/>
</dbReference>
<dbReference type="SUPFAM" id="SSF49384">
    <property type="entry name" value="Carbohydrate-binding domain"/>
    <property type="match status" value="1"/>
</dbReference>
<dbReference type="PROSITE" id="PS51173">
    <property type="entry name" value="CBM2"/>
    <property type="match status" value="1"/>
</dbReference>
<dbReference type="PROSITE" id="PS00561">
    <property type="entry name" value="CBM2_A"/>
    <property type="match status" value="1"/>
</dbReference>
<dbReference type="PROSITE" id="PS00659">
    <property type="entry name" value="GLYCOSYL_HYDROL_F5"/>
    <property type="match status" value="1"/>
</dbReference>
<name>GUNA_STRLI</name>